<name>RS6_ECOL6</name>
<proteinExistence type="inferred from homology"/>
<dbReference type="EMBL" id="AE014075">
    <property type="protein sequence ID" value="AAN83712.1"/>
    <property type="molecule type" value="Genomic_DNA"/>
</dbReference>
<dbReference type="RefSeq" id="WP_001216676.1">
    <property type="nucleotide sequence ID" value="NZ_CP051263.1"/>
</dbReference>
<dbReference type="SMR" id="P0A4D0"/>
<dbReference type="STRING" id="199310.c5291"/>
<dbReference type="GeneID" id="93777623"/>
<dbReference type="KEGG" id="ecc:c5291"/>
<dbReference type="eggNOG" id="COG0360">
    <property type="taxonomic scope" value="Bacteria"/>
</dbReference>
<dbReference type="HOGENOM" id="CLU_113441_6_1_6"/>
<dbReference type="BioCyc" id="ECOL199310:C5291-MONOMER"/>
<dbReference type="Proteomes" id="UP000001410">
    <property type="component" value="Chromosome"/>
</dbReference>
<dbReference type="GO" id="GO:0022627">
    <property type="term" value="C:cytosolic small ribosomal subunit"/>
    <property type="evidence" value="ECO:0007669"/>
    <property type="project" value="TreeGrafter"/>
</dbReference>
<dbReference type="GO" id="GO:0070181">
    <property type="term" value="F:small ribosomal subunit rRNA binding"/>
    <property type="evidence" value="ECO:0007669"/>
    <property type="project" value="TreeGrafter"/>
</dbReference>
<dbReference type="GO" id="GO:0003735">
    <property type="term" value="F:structural constituent of ribosome"/>
    <property type="evidence" value="ECO:0007669"/>
    <property type="project" value="InterPro"/>
</dbReference>
<dbReference type="GO" id="GO:0006412">
    <property type="term" value="P:translation"/>
    <property type="evidence" value="ECO:0007669"/>
    <property type="project" value="UniProtKB-UniRule"/>
</dbReference>
<dbReference type="CDD" id="cd00473">
    <property type="entry name" value="bS6"/>
    <property type="match status" value="1"/>
</dbReference>
<dbReference type="FunFam" id="3.30.70.60:FF:000003">
    <property type="entry name" value="30S ribosomal protein S6"/>
    <property type="match status" value="1"/>
</dbReference>
<dbReference type="Gene3D" id="3.30.70.60">
    <property type="match status" value="1"/>
</dbReference>
<dbReference type="HAMAP" id="MF_00360">
    <property type="entry name" value="Ribosomal_bS6"/>
    <property type="match status" value="1"/>
</dbReference>
<dbReference type="InterPro" id="IPR000529">
    <property type="entry name" value="Ribosomal_bS6"/>
</dbReference>
<dbReference type="InterPro" id="IPR020815">
    <property type="entry name" value="Ribosomal_bS6_CS"/>
</dbReference>
<dbReference type="InterPro" id="IPR035980">
    <property type="entry name" value="Ribosomal_bS6_sf"/>
</dbReference>
<dbReference type="InterPro" id="IPR020814">
    <property type="entry name" value="Ribosomal_S6_plastid/chlpt"/>
</dbReference>
<dbReference type="InterPro" id="IPR014717">
    <property type="entry name" value="Transl_elong_EF1B/ribsomal_bS6"/>
</dbReference>
<dbReference type="NCBIfam" id="TIGR00166">
    <property type="entry name" value="S6"/>
    <property type="match status" value="1"/>
</dbReference>
<dbReference type="PANTHER" id="PTHR21011">
    <property type="entry name" value="MITOCHONDRIAL 28S RIBOSOMAL PROTEIN S6"/>
    <property type="match status" value="1"/>
</dbReference>
<dbReference type="PANTHER" id="PTHR21011:SF1">
    <property type="entry name" value="SMALL RIBOSOMAL SUBUNIT PROTEIN BS6M"/>
    <property type="match status" value="1"/>
</dbReference>
<dbReference type="Pfam" id="PF01250">
    <property type="entry name" value="Ribosomal_S6"/>
    <property type="match status" value="1"/>
</dbReference>
<dbReference type="SUPFAM" id="SSF54995">
    <property type="entry name" value="Ribosomal protein S6"/>
    <property type="match status" value="1"/>
</dbReference>
<dbReference type="PROSITE" id="PS01048">
    <property type="entry name" value="RIBOSOMAL_S6"/>
    <property type="match status" value="1"/>
</dbReference>
<accession>P0A4D0</accession>
<accession>Q8XDI1</accession>
<organism>
    <name type="scientific">Escherichia coli O6:H1 (strain CFT073 / ATCC 700928 / UPEC)</name>
    <dbReference type="NCBI Taxonomy" id="199310"/>
    <lineage>
        <taxon>Bacteria</taxon>
        <taxon>Pseudomonadati</taxon>
        <taxon>Pseudomonadota</taxon>
        <taxon>Gammaproteobacteria</taxon>
        <taxon>Enterobacterales</taxon>
        <taxon>Enterobacteriaceae</taxon>
        <taxon>Escherichia</taxon>
    </lineage>
</organism>
<gene>
    <name evidence="1" type="primary">rpsF</name>
    <name type="ordered locus">c5291</name>
</gene>
<sequence>MRHYEIVFMVHPDQSEQVPGMIERYTAAITGAEGKIHRLEDWGRRQLAYPINKLHKAHYVLMNVEAPQEVIDELETTFRFNDAVIRSMVMRTKHAVTEASPMVKAKDERRERRDDFANETADDAEAGDSEE</sequence>
<keyword id="KW-0007">Acetylation</keyword>
<keyword id="KW-1185">Reference proteome</keyword>
<keyword id="KW-0687">Ribonucleoprotein</keyword>
<keyword id="KW-0689">Ribosomal protein</keyword>
<keyword id="KW-0694">RNA-binding</keyword>
<keyword id="KW-0699">rRNA-binding</keyword>
<reference key="1">
    <citation type="journal article" date="2002" name="Proc. Natl. Acad. Sci. U.S.A.">
        <title>Extensive mosaic structure revealed by the complete genome sequence of uropathogenic Escherichia coli.</title>
        <authorList>
            <person name="Welch R.A."/>
            <person name="Burland V."/>
            <person name="Plunkett G. III"/>
            <person name="Redford P."/>
            <person name="Roesch P."/>
            <person name="Rasko D."/>
            <person name="Buckles E.L."/>
            <person name="Liou S.-R."/>
            <person name="Boutin A."/>
            <person name="Hackett J."/>
            <person name="Stroud D."/>
            <person name="Mayhew G.F."/>
            <person name="Rose D.J."/>
            <person name="Zhou S."/>
            <person name="Schwartz D.C."/>
            <person name="Perna N.T."/>
            <person name="Mobley H.L.T."/>
            <person name="Donnenberg M.S."/>
            <person name="Blattner F.R."/>
        </authorList>
    </citation>
    <scope>NUCLEOTIDE SEQUENCE [LARGE SCALE GENOMIC DNA]</scope>
    <source>
        <strain>CFT073 / ATCC 700928 / UPEC</strain>
    </source>
</reference>
<protein>
    <recommendedName>
        <fullName evidence="1">Small ribosomal subunit protein bS6</fullName>
    </recommendedName>
    <alternativeName>
        <fullName evidence="3">30S ribosomal protein S6</fullName>
    </alternativeName>
</protein>
<feature type="chain" id="PRO_0000176764" description="Small ribosomal subunit protein bS6">
    <location>
        <begin position="1"/>
        <end position="131"/>
    </location>
</feature>
<feature type="region of interest" description="Disordered" evidence="2">
    <location>
        <begin position="98"/>
        <end position="131"/>
    </location>
</feature>
<feature type="compositionally biased region" description="Basic and acidic residues" evidence="2">
    <location>
        <begin position="104"/>
        <end position="116"/>
    </location>
</feature>
<feature type="compositionally biased region" description="Acidic residues" evidence="2">
    <location>
        <begin position="120"/>
        <end position="131"/>
    </location>
</feature>
<feature type="modified residue" description="N6-acetyllysine" evidence="1">
    <location>
        <position position="93"/>
    </location>
</feature>
<comment type="function">
    <text evidence="1">Binds together with bS18 to 16S ribosomal RNA.</text>
</comment>
<comment type="similarity">
    <text evidence="1">Belongs to the bacterial ribosomal protein bS6 family.</text>
</comment>
<evidence type="ECO:0000255" key="1">
    <source>
        <dbReference type="HAMAP-Rule" id="MF_00360"/>
    </source>
</evidence>
<evidence type="ECO:0000256" key="2">
    <source>
        <dbReference type="SAM" id="MobiDB-lite"/>
    </source>
</evidence>
<evidence type="ECO:0000305" key="3"/>